<proteinExistence type="evidence at protein level"/>
<organism>
    <name type="scientific">Escherichia coli (strain K12)</name>
    <dbReference type="NCBI Taxonomy" id="83333"/>
    <lineage>
        <taxon>Bacteria</taxon>
        <taxon>Pseudomonadati</taxon>
        <taxon>Pseudomonadota</taxon>
        <taxon>Gammaproteobacteria</taxon>
        <taxon>Enterobacterales</taxon>
        <taxon>Enterobacteriaceae</taxon>
        <taxon>Escherichia</taxon>
    </lineage>
</organism>
<reference key="1">
    <citation type="journal article" date="1993" name="J. Bacteriol.">
        <title>Identification and transcriptional analysis of the Escherichia coli htrE operon which is homologous to pap and related pilin operons.</title>
        <authorList>
            <person name="Raina S."/>
            <person name="Missiakas D."/>
            <person name="Baird L."/>
            <person name="Kumar S."/>
            <person name="Georgopoulos C."/>
        </authorList>
    </citation>
    <scope>NUCLEOTIDE SEQUENCE [GENOMIC DNA]</scope>
    <scope>INDUCTION</scope>
    <source>
        <strain>K12</strain>
    </source>
</reference>
<reference key="2">
    <citation type="journal article" date="1994" name="Nucleic Acids Res.">
        <title>Systematic sequencing of the Escherichia coli genome: analysis of the 2.4-4.1 min (110,917-193,643 bp) region.</title>
        <authorList>
            <person name="Fujita N."/>
            <person name="Mori H."/>
            <person name="Yura T."/>
            <person name="Ishihama A."/>
        </authorList>
    </citation>
    <scope>NUCLEOTIDE SEQUENCE [LARGE SCALE GENOMIC DNA]</scope>
    <source>
        <strain>K12 / W3110 / ATCC 27325 / DSM 5911</strain>
    </source>
</reference>
<reference key="3">
    <citation type="journal article" date="1997" name="Science">
        <title>The complete genome sequence of Escherichia coli K-12.</title>
        <authorList>
            <person name="Blattner F.R."/>
            <person name="Plunkett G. III"/>
            <person name="Bloch C.A."/>
            <person name="Perna N.T."/>
            <person name="Burland V."/>
            <person name="Riley M."/>
            <person name="Collado-Vides J."/>
            <person name="Glasner J.D."/>
            <person name="Rode C.K."/>
            <person name="Mayhew G.F."/>
            <person name="Gregor J."/>
            <person name="Davis N.W."/>
            <person name="Kirkpatrick H.A."/>
            <person name="Goeden M.A."/>
            <person name="Rose D.J."/>
            <person name="Mau B."/>
            <person name="Shao Y."/>
        </authorList>
    </citation>
    <scope>NUCLEOTIDE SEQUENCE [LARGE SCALE GENOMIC DNA]</scope>
    <source>
        <strain>K12 / MG1655 / ATCC 47076</strain>
    </source>
</reference>
<reference key="4">
    <citation type="journal article" date="2006" name="Mol. Syst. Biol.">
        <title>Highly accurate genome sequences of Escherichia coli K-12 strains MG1655 and W3110.</title>
        <authorList>
            <person name="Hayashi K."/>
            <person name="Morooka N."/>
            <person name="Yamamoto Y."/>
            <person name="Fujita K."/>
            <person name="Isono K."/>
            <person name="Choi S."/>
            <person name="Ohtsubo E."/>
            <person name="Baba T."/>
            <person name="Wanner B.L."/>
            <person name="Mori H."/>
            <person name="Horiuchi T."/>
        </authorList>
    </citation>
    <scope>NUCLEOTIDE SEQUENCE [LARGE SCALE GENOMIC DNA]</scope>
    <source>
        <strain>K12 / W3110 / ATCC 27325 / DSM 5911</strain>
    </source>
</reference>
<reference key="5">
    <citation type="submission" date="1994-12" db="UniProtKB">
        <authorList>
            <person name="Raina S."/>
        </authorList>
    </citation>
    <scope>PROTEIN SEQUENCE OF 30-33</scope>
</reference>
<reference key="6">
    <citation type="journal article" date="2010" name="Environ. Microbiol.">
        <title>Escherichia coli K-12 possesses multiple cryptic but functional chaperone-usher fimbriae with distinct surface specificities.</title>
        <authorList>
            <person name="Korea C.G."/>
            <person name="Badouraly R."/>
            <person name="Prevost M.C."/>
            <person name="Ghigo J.M."/>
            <person name="Beloin C."/>
        </authorList>
    </citation>
    <scope>FUNCTION</scope>
    <scope>INDUCTION</scope>
    <scope>DISRUPTION PHENOTYPE</scope>
    <source>
        <strain>K12 / MG1655 / ATCC 47076</strain>
    </source>
</reference>
<evidence type="ECO:0000250" key="1"/>
<evidence type="ECO:0000255" key="2"/>
<evidence type="ECO:0000269" key="3">
    <source>
    </source>
</evidence>
<evidence type="ECO:0000269" key="4">
    <source>
    </source>
</evidence>
<evidence type="ECO:0000269" key="5">
    <source ref="5"/>
</evidence>
<evidence type="ECO:0000305" key="6"/>
<evidence type="ECO:0000305" key="7">
    <source>
    </source>
</evidence>
<dbReference type="EMBL" id="L00680">
    <property type="protein sequence ID" value="AAA23721.1"/>
    <property type="status" value="ALT_SEQ"/>
    <property type="molecule type" value="Genomic_DNA"/>
</dbReference>
<dbReference type="EMBL" id="U00096">
    <property type="protein sequence ID" value="AAC73250.1"/>
    <property type="molecule type" value="Genomic_DNA"/>
</dbReference>
<dbReference type="EMBL" id="AP009048">
    <property type="protein sequence ID" value="BAE76043.1"/>
    <property type="molecule type" value="Genomic_DNA"/>
</dbReference>
<dbReference type="PIR" id="C64737">
    <property type="entry name" value="C64737"/>
</dbReference>
<dbReference type="RefSeq" id="NP_414681.1">
    <property type="nucleotide sequence ID" value="NC_000913.3"/>
</dbReference>
<dbReference type="RefSeq" id="WP_000151605.1">
    <property type="nucleotide sequence ID" value="NZ_LN832404.1"/>
</dbReference>
<dbReference type="SMR" id="P33129"/>
<dbReference type="BioGRID" id="4259738">
    <property type="interactions" value="128"/>
</dbReference>
<dbReference type="BioGRID" id="849220">
    <property type="interactions" value="5"/>
</dbReference>
<dbReference type="DIP" id="DIP-9953N"/>
<dbReference type="FunCoup" id="P33129">
    <property type="interactions" value="61"/>
</dbReference>
<dbReference type="IntAct" id="P33129">
    <property type="interactions" value="9"/>
</dbReference>
<dbReference type="STRING" id="511145.b0139"/>
<dbReference type="TCDB" id="1.B.11.3.3">
    <property type="family name" value="the outer membrane fimbrial usher porin (fup) family"/>
</dbReference>
<dbReference type="PaxDb" id="511145-b0139"/>
<dbReference type="EnsemblBacteria" id="AAC73250">
    <property type="protein sequence ID" value="AAC73250"/>
    <property type="gene ID" value="b0139"/>
</dbReference>
<dbReference type="GeneID" id="944819"/>
<dbReference type="KEGG" id="ecj:JW0135"/>
<dbReference type="KEGG" id="eco:b0139"/>
<dbReference type="KEGG" id="ecoc:C3026_00600"/>
<dbReference type="PATRIC" id="fig|1411691.4.peg.2142"/>
<dbReference type="EchoBASE" id="EB1915"/>
<dbReference type="eggNOG" id="COG3188">
    <property type="taxonomic scope" value="Bacteria"/>
</dbReference>
<dbReference type="HOGENOM" id="CLU_009120_1_0_6"/>
<dbReference type="InParanoid" id="P33129"/>
<dbReference type="OMA" id="RMKNQFT"/>
<dbReference type="OrthoDB" id="6554712at2"/>
<dbReference type="PhylomeDB" id="P33129"/>
<dbReference type="BioCyc" id="EcoCyc:EG11972-MONOMER"/>
<dbReference type="PRO" id="PR:P33129"/>
<dbReference type="Proteomes" id="UP000000625">
    <property type="component" value="Chromosome"/>
</dbReference>
<dbReference type="GO" id="GO:0009279">
    <property type="term" value="C:cell outer membrane"/>
    <property type="evidence" value="ECO:0000318"/>
    <property type="project" value="GO_Central"/>
</dbReference>
<dbReference type="GO" id="GO:0015473">
    <property type="term" value="F:fimbrial usher porin activity"/>
    <property type="evidence" value="ECO:0000250"/>
    <property type="project" value="EcoCyc"/>
</dbReference>
<dbReference type="GO" id="GO:0007155">
    <property type="term" value="P:cell adhesion"/>
    <property type="evidence" value="ECO:0000315"/>
    <property type="project" value="EcoCyc"/>
</dbReference>
<dbReference type="GO" id="GO:0009297">
    <property type="term" value="P:pilus assembly"/>
    <property type="evidence" value="ECO:0000318"/>
    <property type="project" value="GO_Central"/>
</dbReference>
<dbReference type="FunFam" id="2.60.40.3110:FF:000001">
    <property type="entry name" value="Putative fimbrial outer membrane usher"/>
    <property type="match status" value="1"/>
</dbReference>
<dbReference type="Gene3D" id="2.60.40.2070">
    <property type="match status" value="1"/>
</dbReference>
<dbReference type="Gene3D" id="2.60.40.3110">
    <property type="match status" value="1"/>
</dbReference>
<dbReference type="Gene3D" id="3.10.20.410">
    <property type="match status" value="1"/>
</dbReference>
<dbReference type="Gene3D" id="2.60.40.2610">
    <property type="entry name" value="Outer membrane usher protein FimD, plug domain"/>
    <property type="match status" value="1"/>
</dbReference>
<dbReference type="InterPro" id="IPR000015">
    <property type="entry name" value="Fimb_usher"/>
</dbReference>
<dbReference type="InterPro" id="IPR018030">
    <property type="entry name" value="Fimbrial_membr_usher_CS"/>
</dbReference>
<dbReference type="InterPro" id="IPR042186">
    <property type="entry name" value="FimD_plug_dom"/>
</dbReference>
<dbReference type="InterPro" id="IPR025949">
    <property type="entry name" value="PapC-like_C"/>
</dbReference>
<dbReference type="InterPro" id="IPR043142">
    <property type="entry name" value="PapC-like_C_sf"/>
</dbReference>
<dbReference type="InterPro" id="IPR025885">
    <property type="entry name" value="PapC_N"/>
</dbReference>
<dbReference type="InterPro" id="IPR037224">
    <property type="entry name" value="PapC_N_sf"/>
</dbReference>
<dbReference type="NCBIfam" id="NF007337">
    <property type="entry name" value="PRK09828.1"/>
    <property type="match status" value="1"/>
</dbReference>
<dbReference type="PANTHER" id="PTHR30451">
    <property type="entry name" value="OUTER MEMBRANE USHER PROTEIN"/>
    <property type="match status" value="1"/>
</dbReference>
<dbReference type="PANTHER" id="PTHR30451:SF3">
    <property type="entry name" value="OUTER MEMBRANE USHER PROTEIN HTRE-RELATED"/>
    <property type="match status" value="1"/>
</dbReference>
<dbReference type="Pfam" id="PF13953">
    <property type="entry name" value="PapC_C"/>
    <property type="match status" value="1"/>
</dbReference>
<dbReference type="Pfam" id="PF13954">
    <property type="entry name" value="PapC_N"/>
    <property type="match status" value="1"/>
</dbReference>
<dbReference type="Pfam" id="PF00577">
    <property type="entry name" value="Usher"/>
    <property type="match status" value="1"/>
</dbReference>
<dbReference type="SUPFAM" id="SSF141729">
    <property type="entry name" value="FimD N-terminal domain-like"/>
    <property type="match status" value="1"/>
</dbReference>
<dbReference type="PROSITE" id="PS01151">
    <property type="entry name" value="FIMBRIAL_USHER"/>
    <property type="match status" value="1"/>
</dbReference>
<accession>P33129</accession>
<accession>Q2MCG3</accession>
<gene>
    <name type="primary">htrE</name>
    <name type="ordered locus">b0139</name>
    <name type="ordered locus">JW0135</name>
</gene>
<comment type="function">
    <text evidence="3">Part of the yadCKLM-htrE-yadVN fimbrial operon. Could contribute to adhesion to various surfaces in specific environmental niches. Probably involved in the export and assembly of fimbrial subunits across the outer membrane.</text>
</comment>
<comment type="interaction">
    <interactant intactId="EBI-550887">
        <id>P33129</id>
    </interactant>
    <interactant intactId="EBI-553345">
        <id>P07813</id>
        <label>leuS</label>
    </interactant>
    <organismsDiffer>false</organismsDiffer>
    <experiments>3</experiments>
</comment>
<comment type="subcellular location">
    <subcellularLocation>
        <location evidence="1">Cell outer membrane</location>
        <topology evidence="1">Multi-pass membrane protein</topology>
    </subcellularLocation>
</comment>
<comment type="induction">
    <text evidence="3 4">Repressed by H-NS. Induced by heat shock.</text>
</comment>
<comment type="disruption phenotype">
    <text evidence="3">Deletion of the operon under classical laboratory conditions does not result in any major effect on E.coli capacity to form biofilms compared with the wild-type strain.</text>
</comment>
<comment type="miscellaneous">
    <text evidence="7">The operon is cryptic under classical laboratory conditions, but is functional when constitutively expressed.</text>
</comment>
<comment type="similarity">
    <text evidence="6">Belongs to the fimbrial export usher family.</text>
</comment>
<comment type="sequence caution" evidence="6">
    <conflict type="miscellaneous discrepancy">
        <sequence resource="EMBL-CDS" id="AAA23721"/>
    </conflict>
    <text>Incorrect in position 61 onward due to a cloning artifact.</text>
</comment>
<feature type="signal peptide" evidence="5">
    <location>
        <begin position="1"/>
        <end position="29"/>
    </location>
</feature>
<feature type="chain" id="PRO_0000009319" description="Outer membrane usher protein HtrE">
    <location>
        <begin position="30"/>
        <end position="865"/>
    </location>
</feature>
<feature type="disulfide bond" evidence="2">
    <location>
        <begin position="838"/>
        <end position="862"/>
    </location>
</feature>
<feature type="sequence conflict" description="In Ref. 1; AAA23721." evidence="6" ref="1">
    <original>S</original>
    <variation>T</variation>
    <location>
        <position position="51"/>
    </location>
</feature>
<feature type="sequence conflict" description="In Ref. 1; AAA23721." evidence="6" ref="1">
    <original>QG</original>
    <variation>HR</variation>
    <location>
        <begin position="810"/>
        <end position="811"/>
    </location>
</feature>
<feature type="sequence conflict" description="In Ref. 1; AAA23721." evidence="6" ref="1">
    <original>E</original>
    <variation>P</variation>
    <location>
        <position position="849"/>
    </location>
</feature>
<sequence>MTIEYTKNYHHLTRIATFCALLYCNTAFSAELVEYDHTFLMGQNASNIDLSRYSEGNPAIPGVYDVSVYVNDQPIINQSITFVAIEGKKNAQACITLKNLLQFHINSPDINNEKAVLLARDETLGNCLNLTEIIPQASVRYDVNDQRLDIDVPQAWVMKNYQNYVDPSLWENGINAAMLSYNLNGYHSETPGRKNESIYAAFNGGMNLGAWRLRASGNYNWMTDSGSNYDFKNRYVQRDIASLRSQLILGESYTTGETFDSVSIRGIRLYSDSRMLPPTLASFAPIIHGVANTNAKVTITQGGYKIYETTVPPGAFVIDDLSPSGYGSDLIVTIEESDGSKRTFSQPFSSVVQMLRPGVGRWDISGGQVLKDDIQDEPNLFQASYYYGLNNYLTGYTGIQITDNNYTAGLLGLGLNTSVGAFSFDVTHSNVRIPDDKTYQGQSYRVSWNKLFEETSTSLNIAAYRYSTQNYLGLNDALTLIDEVKHPEQDLEPKSMRNYSRMKNQVTVSINQPLKFEKKDYGSFYLSGSWSDYWASGQNRSNYSIGYSNSTSWGSYSVSAQRSWNEDGDTDDSVYLSFTIPIEKLLGTEQRTSGFQSIDTQISSDFKGNNQLNVSSSGYSDNARVSYSVNTGYTMNKASKDLSYVGGYASYESPWGTLAGSISANSDNSRQVSLSTDGGFVLHSGGLTFSNDSFSDSDTLAVVQAPGAQGARINYGNSTIDRWGYGVTSALSPYHENRIALDINDLENDVELKSTSAVAVPRQGSVVFADFETVQGQSAIMNITRSDGKNIPFAADIYDEQGNVIGNVGQGGQAFVRGIEQQGNISIKWLEQSKPVSCLAHYQQSPEAEKIAQSIILNGIRCQIQ</sequence>
<protein>
    <recommendedName>
        <fullName>Outer membrane usher protein HtrE</fullName>
    </recommendedName>
    <alternativeName>
        <fullName>Heat shock protein E</fullName>
    </alternativeName>
</protein>
<keyword id="KW-0998">Cell outer membrane</keyword>
<keyword id="KW-0903">Direct protein sequencing</keyword>
<keyword id="KW-1015">Disulfide bond</keyword>
<keyword id="KW-1029">Fimbrium biogenesis</keyword>
<keyword id="KW-0472">Membrane</keyword>
<keyword id="KW-1185">Reference proteome</keyword>
<keyword id="KW-0732">Signal</keyword>
<keyword id="KW-0346">Stress response</keyword>
<keyword id="KW-0812">Transmembrane</keyword>
<keyword id="KW-1134">Transmembrane beta strand</keyword>
<keyword id="KW-0813">Transport</keyword>
<name>HTRE_ECOLI</name>